<protein>
    <recommendedName>
        <fullName evidence="1">ATP synthase subunit alpha</fullName>
        <ecNumber evidence="1">7.1.2.2</ecNumber>
    </recommendedName>
    <alternativeName>
        <fullName evidence="1">ATP synthase F1 sector subunit alpha</fullName>
    </alternativeName>
    <alternativeName>
        <fullName evidence="1">F-ATPase subunit alpha</fullName>
    </alternativeName>
</protein>
<gene>
    <name evidence="1" type="primary">atpA</name>
    <name type="ordered locus">Ppha_2705</name>
</gene>
<dbReference type="EC" id="7.1.2.2" evidence="1"/>
<dbReference type="EMBL" id="CP001110">
    <property type="protein sequence ID" value="ACF44863.1"/>
    <property type="molecule type" value="Genomic_DNA"/>
</dbReference>
<dbReference type="RefSeq" id="WP_012509335.1">
    <property type="nucleotide sequence ID" value="NC_011060.1"/>
</dbReference>
<dbReference type="SMR" id="B4SGC7"/>
<dbReference type="STRING" id="324925.Ppha_2705"/>
<dbReference type="KEGG" id="pph:Ppha_2705"/>
<dbReference type="eggNOG" id="COG0056">
    <property type="taxonomic scope" value="Bacteria"/>
</dbReference>
<dbReference type="HOGENOM" id="CLU_010091_2_1_10"/>
<dbReference type="OrthoDB" id="9803053at2"/>
<dbReference type="Proteomes" id="UP000002724">
    <property type="component" value="Chromosome"/>
</dbReference>
<dbReference type="GO" id="GO:0005886">
    <property type="term" value="C:plasma membrane"/>
    <property type="evidence" value="ECO:0007669"/>
    <property type="project" value="UniProtKB-SubCell"/>
</dbReference>
<dbReference type="GO" id="GO:0045259">
    <property type="term" value="C:proton-transporting ATP synthase complex"/>
    <property type="evidence" value="ECO:0007669"/>
    <property type="project" value="UniProtKB-KW"/>
</dbReference>
<dbReference type="GO" id="GO:0043531">
    <property type="term" value="F:ADP binding"/>
    <property type="evidence" value="ECO:0007669"/>
    <property type="project" value="TreeGrafter"/>
</dbReference>
<dbReference type="GO" id="GO:0005524">
    <property type="term" value="F:ATP binding"/>
    <property type="evidence" value="ECO:0007669"/>
    <property type="project" value="UniProtKB-UniRule"/>
</dbReference>
<dbReference type="GO" id="GO:0046933">
    <property type="term" value="F:proton-transporting ATP synthase activity, rotational mechanism"/>
    <property type="evidence" value="ECO:0007669"/>
    <property type="project" value="UniProtKB-UniRule"/>
</dbReference>
<dbReference type="CDD" id="cd18113">
    <property type="entry name" value="ATP-synt_F1_alpha_C"/>
    <property type="match status" value="1"/>
</dbReference>
<dbReference type="CDD" id="cd18116">
    <property type="entry name" value="ATP-synt_F1_alpha_N"/>
    <property type="match status" value="1"/>
</dbReference>
<dbReference type="CDD" id="cd01132">
    <property type="entry name" value="F1-ATPase_alpha_CD"/>
    <property type="match status" value="1"/>
</dbReference>
<dbReference type="FunFam" id="1.20.150.20:FF:000001">
    <property type="entry name" value="ATP synthase subunit alpha"/>
    <property type="match status" value="1"/>
</dbReference>
<dbReference type="FunFam" id="2.40.30.20:FF:000001">
    <property type="entry name" value="ATP synthase subunit alpha"/>
    <property type="match status" value="1"/>
</dbReference>
<dbReference type="FunFam" id="3.40.50.300:FF:000002">
    <property type="entry name" value="ATP synthase subunit alpha"/>
    <property type="match status" value="1"/>
</dbReference>
<dbReference type="Gene3D" id="2.40.30.20">
    <property type="match status" value="1"/>
</dbReference>
<dbReference type="Gene3D" id="1.20.150.20">
    <property type="entry name" value="ATP synthase alpha/beta chain, C-terminal domain"/>
    <property type="match status" value="1"/>
</dbReference>
<dbReference type="Gene3D" id="3.40.50.300">
    <property type="entry name" value="P-loop containing nucleotide triphosphate hydrolases"/>
    <property type="match status" value="1"/>
</dbReference>
<dbReference type="HAMAP" id="MF_01346">
    <property type="entry name" value="ATP_synth_alpha_bact"/>
    <property type="match status" value="1"/>
</dbReference>
<dbReference type="InterPro" id="IPR023366">
    <property type="entry name" value="ATP_synth_asu-like_sf"/>
</dbReference>
<dbReference type="InterPro" id="IPR000793">
    <property type="entry name" value="ATP_synth_asu_C"/>
</dbReference>
<dbReference type="InterPro" id="IPR038376">
    <property type="entry name" value="ATP_synth_asu_C_sf"/>
</dbReference>
<dbReference type="InterPro" id="IPR033732">
    <property type="entry name" value="ATP_synth_F1_a_nt-bd_dom"/>
</dbReference>
<dbReference type="InterPro" id="IPR005294">
    <property type="entry name" value="ATP_synth_F1_asu"/>
</dbReference>
<dbReference type="InterPro" id="IPR020003">
    <property type="entry name" value="ATPase_a/bsu_AS"/>
</dbReference>
<dbReference type="InterPro" id="IPR004100">
    <property type="entry name" value="ATPase_F1/V1/A1_a/bsu_N"/>
</dbReference>
<dbReference type="InterPro" id="IPR036121">
    <property type="entry name" value="ATPase_F1/V1/A1_a/bsu_N_sf"/>
</dbReference>
<dbReference type="InterPro" id="IPR000194">
    <property type="entry name" value="ATPase_F1/V1/A1_a/bsu_nucl-bd"/>
</dbReference>
<dbReference type="InterPro" id="IPR027417">
    <property type="entry name" value="P-loop_NTPase"/>
</dbReference>
<dbReference type="NCBIfam" id="TIGR00962">
    <property type="entry name" value="atpA"/>
    <property type="match status" value="1"/>
</dbReference>
<dbReference type="NCBIfam" id="NF009884">
    <property type="entry name" value="PRK13343.1"/>
    <property type="match status" value="1"/>
</dbReference>
<dbReference type="PANTHER" id="PTHR48082">
    <property type="entry name" value="ATP SYNTHASE SUBUNIT ALPHA, MITOCHONDRIAL"/>
    <property type="match status" value="1"/>
</dbReference>
<dbReference type="PANTHER" id="PTHR48082:SF2">
    <property type="entry name" value="ATP SYNTHASE SUBUNIT ALPHA, MITOCHONDRIAL"/>
    <property type="match status" value="1"/>
</dbReference>
<dbReference type="Pfam" id="PF00006">
    <property type="entry name" value="ATP-synt_ab"/>
    <property type="match status" value="1"/>
</dbReference>
<dbReference type="Pfam" id="PF00306">
    <property type="entry name" value="ATP-synt_ab_C"/>
    <property type="match status" value="1"/>
</dbReference>
<dbReference type="Pfam" id="PF02874">
    <property type="entry name" value="ATP-synt_ab_N"/>
    <property type="match status" value="1"/>
</dbReference>
<dbReference type="PIRSF" id="PIRSF039088">
    <property type="entry name" value="F_ATPase_subunit_alpha"/>
    <property type="match status" value="1"/>
</dbReference>
<dbReference type="SUPFAM" id="SSF47917">
    <property type="entry name" value="C-terminal domain of alpha and beta subunits of F1 ATP synthase"/>
    <property type="match status" value="1"/>
</dbReference>
<dbReference type="SUPFAM" id="SSF50615">
    <property type="entry name" value="N-terminal domain of alpha and beta subunits of F1 ATP synthase"/>
    <property type="match status" value="1"/>
</dbReference>
<dbReference type="SUPFAM" id="SSF52540">
    <property type="entry name" value="P-loop containing nucleoside triphosphate hydrolases"/>
    <property type="match status" value="1"/>
</dbReference>
<dbReference type="PROSITE" id="PS00152">
    <property type="entry name" value="ATPASE_ALPHA_BETA"/>
    <property type="match status" value="1"/>
</dbReference>
<accession>B4SGC7</accession>
<reference key="1">
    <citation type="submission" date="2008-06" db="EMBL/GenBank/DDBJ databases">
        <title>Complete sequence of Pelodictyon phaeoclathratiforme BU-1.</title>
        <authorList>
            <consortium name="US DOE Joint Genome Institute"/>
            <person name="Lucas S."/>
            <person name="Copeland A."/>
            <person name="Lapidus A."/>
            <person name="Glavina del Rio T."/>
            <person name="Dalin E."/>
            <person name="Tice H."/>
            <person name="Bruce D."/>
            <person name="Goodwin L."/>
            <person name="Pitluck S."/>
            <person name="Schmutz J."/>
            <person name="Larimer F."/>
            <person name="Land M."/>
            <person name="Hauser L."/>
            <person name="Kyrpides N."/>
            <person name="Mikhailova N."/>
            <person name="Liu Z."/>
            <person name="Li T."/>
            <person name="Zhao F."/>
            <person name="Overmann J."/>
            <person name="Bryant D.A."/>
            <person name="Richardson P."/>
        </authorList>
    </citation>
    <scope>NUCLEOTIDE SEQUENCE [LARGE SCALE GENOMIC DNA]</scope>
    <source>
        <strain>DSM 5477 / BU-1</strain>
    </source>
</reference>
<feature type="chain" id="PRO_1000143418" description="ATP synthase subunit alpha">
    <location>
        <begin position="1"/>
        <end position="526"/>
    </location>
</feature>
<feature type="binding site" evidence="1">
    <location>
        <begin position="171"/>
        <end position="178"/>
    </location>
    <ligand>
        <name>ATP</name>
        <dbReference type="ChEBI" id="CHEBI:30616"/>
    </ligand>
</feature>
<feature type="site" description="Required for activity" evidence="1">
    <location>
        <position position="382"/>
    </location>
</feature>
<keyword id="KW-0066">ATP synthesis</keyword>
<keyword id="KW-0067">ATP-binding</keyword>
<keyword id="KW-0997">Cell inner membrane</keyword>
<keyword id="KW-1003">Cell membrane</keyword>
<keyword id="KW-0139">CF(1)</keyword>
<keyword id="KW-0375">Hydrogen ion transport</keyword>
<keyword id="KW-0406">Ion transport</keyword>
<keyword id="KW-0472">Membrane</keyword>
<keyword id="KW-0547">Nucleotide-binding</keyword>
<keyword id="KW-1185">Reference proteome</keyword>
<keyword id="KW-1278">Translocase</keyword>
<keyword id="KW-0813">Transport</keyword>
<proteinExistence type="inferred from homology"/>
<evidence type="ECO:0000255" key="1">
    <source>
        <dbReference type="HAMAP-Rule" id="MF_01346"/>
    </source>
</evidence>
<name>ATPA_PELPB</name>
<organism>
    <name type="scientific">Pelodictyon phaeoclathratiforme (strain DSM 5477 / BU-1)</name>
    <dbReference type="NCBI Taxonomy" id="324925"/>
    <lineage>
        <taxon>Bacteria</taxon>
        <taxon>Pseudomonadati</taxon>
        <taxon>Chlorobiota</taxon>
        <taxon>Chlorobiia</taxon>
        <taxon>Chlorobiales</taxon>
        <taxon>Chlorobiaceae</taxon>
        <taxon>Chlorobium/Pelodictyon group</taxon>
        <taxon>Pelodictyon</taxon>
    </lineage>
</organism>
<comment type="function">
    <text evidence="1">Produces ATP from ADP in the presence of a proton gradient across the membrane. The alpha chain is a regulatory subunit.</text>
</comment>
<comment type="catalytic activity">
    <reaction evidence="1">
        <text>ATP + H2O + 4 H(+)(in) = ADP + phosphate + 5 H(+)(out)</text>
        <dbReference type="Rhea" id="RHEA:57720"/>
        <dbReference type="ChEBI" id="CHEBI:15377"/>
        <dbReference type="ChEBI" id="CHEBI:15378"/>
        <dbReference type="ChEBI" id="CHEBI:30616"/>
        <dbReference type="ChEBI" id="CHEBI:43474"/>
        <dbReference type="ChEBI" id="CHEBI:456216"/>
        <dbReference type="EC" id="7.1.2.2"/>
    </reaction>
</comment>
<comment type="subunit">
    <text evidence="1">F-type ATPases have 2 components, CF(1) - the catalytic core - and CF(0) - the membrane proton channel. CF(1) has five subunits: alpha(3), beta(3), gamma(1), delta(1), epsilon(1). CF(0) has four main subunits: a, b, b' and c.</text>
</comment>
<comment type="subcellular location">
    <subcellularLocation>
        <location evidence="1">Cell inner membrane</location>
        <topology evidence="1">Peripheral membrane protein</topology>
    </subcellularLocation>
</comment>
<comment type="similarity">
    <text evidence="1">Belongs to the ATPase alpha/beta chains family.</text>
</comment>
<sequence>MSTTVRPDEVSSILRKQLAGFESEAEVYDVGTVLQVGDGIARVYGLSKVAAGELLEFPNNVMGMALNLEEDNVGAVLFGESNLVKEGDTVKRTSILASIPVGEAMLGRVINPLGEPIDGKGTIDTQIRLPLERRAPGVIYRKSVHEPLQTGLKAIDSMIPIGRGQRELIIGDRQTGKTAVAIDTIINQKGKGVFCIYVAIGLKGSTVAQVVNTLEKYDAMEYTTVISATASDPAPLQFIAPFAGATLGEYFRDTGRHALVVYDDLSKQAVAYRQVSLLLRRPPGREAYPGDVFYLHSRLLERAAKITDDIEVARKMNDLPDALKSLVKGGGSLTALPVIETQAGDVSAYIPTNVISITDGQIFLESNLFNSGQRPAINVGISVSRVGGSAQIKAMKKVAGTLRLDLAQFRELEAFSKFGSDLDKTTKAQLDRGARLVEILKQGQYIPMPVEKQVAIIFLGTQGLLDTVDLRFIRKFEEEFLSLLEIKHNDLLAKIASSGALEADTAAKLKDIAVKFVTVFKEKNKA</sequence>